<accession>Q9XC20</accession>
<dbReference type="EC" id="1.17.4.1"/>
<dbReference type="EMBL" id="AF152114">
    <property type="protein sequence ID" value="AAD45275.1"/>
    <property type="molecule type" value="Genomic_DNA"/>
</dbReference>
<dbReference type="EMBL" id="AE015450">
    <property type="protein sequence ID" value="AAP56395.1"/>
    <property type="molecule type" value="Genomic_DNA"/>
</dbReference>
<dbReference type="RefSeq" id="WP_011113274.1">
    <property type="nucleotide sequence ID" value="NC_004829.2"/>
</dbReference>
<dbReference type="SMR" id="Q9XC20"/>
<dbReference type="GeneID" id="93509865"/>
<dbReference type="KEGG" id="mga:MGA_0698"/>
<dbReference type="HOGENOM" id="CLU_052495_0_0_14"/>
<dbReference type="OrthoDB" id="9766544at2"/>
<dbReference type="Proteomes" id="UP000001418">
    <property type="component" value="Chromosome"/>
</dbReference>
<dbReference type="GO" id="GO:0005971">
    <property type="term" value="C:ribonucleoside-diphosphate reductase complex"/>
    <property type="evidence" value="ECO:0007669"/>
    <property type="project" value="InterPro"/>
</dbReference>
<dbReference type="GO" id="GO:0046872">
    <property type="term" value="F:metal ion binding"/>
    <property type="evidence" value="ECO:0007669"/>
    <property type="project" value="UniProtKB-KW"/>
</dbReference>
<dbReference type="GO" id="GO:0004748">
    <property type="term" value="F:ribonucleoside-diphosphate reductase activity, thioredoxin disulfide as acceptor"/>
    <property type="evidence" value="ECO:0007669"/>
    <property type="project" value="UniProtKB-EC"/>
</dbReference>
<dbReference type="GO" id="GO:0009263">
    <property type="term" value="P:deoxyribonucleotide biosynthetic process"/>
    <property type="evidence" value="ECO:0007669"/>
    <property type="project" value="UniProtKB-KW"/>
</dbReference>
<dbReference type="CDD" id="cd01049">
    <property type="entry name" value="RNRR2"/>
    <property type="match status" value="1"/>
</dbReference>
<dbReference type="Gene3D" id="1.10.620.20">
    <property type="entry name" value="Ribonucleotide Reductase, subunit A"/>
    <property type="match status" value="1"/>
</dbReference>
<dbReference type="InterPro" id="IPR009078">
    <property type="entry name" value="Ferritin-like_SF"/>
</dbReference>
<dbReference type="InterPro" id="IPR012348">
    <property type="entry name" value="RNR-like"/>
</dbReference>
<dbReference type="InterPro" id="IPR026494">
    <property type="entry name" value="RNR_NrdF-like"/>
</dbReference>
<dbReference type="InterPro" id="IPR033909">
    <property type="entry name" value="RNR_small"/>
</dbReference>
<dbReference type="InterPro" id="IPR000358">
    <property type="entry name" value="RNR_small_fam"/>
</dbReference>
<dbReference type="NCBIfam" id="NF007182">
    <property type="entry name" value="PRK09614.1-1"/>
    <property type="match status" value="1"/>
</dbReference>
<dbReference type="NCBIfam" id="NF010572">
    <property type="entry name" value="PRK13965.1"/>
    <property type="match status" value="1"/>
</dbReference>
<dbReference type="NCBIfam" id="TIGR04171">
    <property type="entry name" value="RNR_1b_NrdF"/>
    <property type="match status" value="1"/>
</dbReference>
<dbReference type="PANTHER" id="PTHR23409">
    <property type="entry name" value="RIBONUCLEOSIDE-DIPHOSPHATE REDUCTASE SMALL CHAIN"/>
    <property type="match status" value="1"/>
</dbReference>
<dbReference type="PANTHER" id="PTHR23409:SF18">
    <property type="entry name" value="RIBONUCLEOSIDE-DIPHOSPHATE REDUCTASE SUBUNIT M2"/>
    <property type="match status" value="1"/>
</dbReference>
<dbReference type="Pfam" id="PF00268">
    <property type="entry name" value="Ribonuc_red_sm"/>
    <property type="match status" value="1"/>
</dbReference>
<dbReference type="SUPFAM" id="SSF47240">
    <property type="entry name" value="Ferritin-like"/>
    <property type="match status" value="1"/>
</dbReference>
<protein>
    <recommendedName>
        <fullName>Ribonucleoside-diphosphate reductase subunit beta</fullName>
        <ecNumber>1.17.4.1</ecNumber>
    </recommendedName>
    <alternativeName>
        <fullName>Ribonucleotide reductase small subunit</fullName>
    </alternativeName>
</protein>
<name>RIR2_MYCGA</name>
<organism>
    <name type="scientific">Mycoplasmoides gallisepticum (strain R(low / passage 15 / clone 2))</name>
    <name type="common">Mycoplasma gallisepticum</name>
    <dbReference type="NCBI Taxonomy" id="710127"/>
    <lineage>
        <taxon>Bacteria</taxon>
        <taxon>Bacillati</taxon>
        <taxon>Mycoplasmatota</taxon>
        <taxon>Mycoplasmoidales</taxon>
        <taxon>Mycoplasmoidaceae</taxon>
        <taxon>Mycoplasmoides</taxon>
    </lineage>
</organism>
<sequence length="339" mass="39168">MSNNNKYYDKSFSPLGYVANGQKGVMRSINWNVINDPKDLEVWTRVTQNFWLPEKIPVSNDLKSWNELTPEWKQLVTRTFTGLTLLDTIQCTLGDIAQIPNSLTDHEQFVYANFSFMVGVHARSYGTIFSTLNTSDEIEEAHEWVINNEKLQARAKFLVPYYTSDDPLKSKIAAALMPGFLLYGGFYLPFYLAARGKLPNTSDIIRLILRDKVIHNYYSGYKYRLKVQKLPKEKQEEYKKFVFEILYKLIELEKDFLRELYDGFGLADEAIAFSLYNAGKFLQNCGYESPFTPEETKISPEVFAQLSARADENHDFFSGNGSSYIMGVTEETQDDDWEF</sequence>
<comment type="function">
    <text evidence="1">Provides the precursors necessary for DNA synthesis. Catalyzes the biosynthesis of deoxyribonucleotides from the corresponding ribonucleotides (By similarity).</text>
</comment>
<comment type="catalytic activity">
    <reaction>
        <text>a 2'-deoxyribonucleoside 5'-diphosphate + [thioredoxin]-disulfide + H2O = a ribonucleoside 5'-diphosphate + [thioredoxin]-dithiol</text>
        <dbReference type="Rhea" id="RHEA:23252"/>
        <dbReference type="Rhea" id="RHEA-COMP:10698"/>
        <dbReference type="Rhea" id="RHEA-COMP:10700"/>
        <dbReference type="ChEBI" id="CHEBI:15377"/>
        <dbReference type="ChEBI" id="CHEBI:29950"/>
        <dbReference type="ChEBI" id="CHEBI:50058"/>
        <dbReference type="ChEBI" id="CHEBI:57930"/>
        <dbReference type="ChEBI" id="CHEBI:73316"/>
        <dbReference type="EC" id="1.17.4.1"/>
    </reaction>
</comment>
<comment type="cofactor">
    <cofactor evidence="1">
        <name>Fe cation</name>
        <dbReference type="ChEBI" id="CHEBI:24875"/>
    </cofactor>
    <text evidence="1">Binds 2 iron ions per subunit.</text>
</comment>
<comment type="subunit">
    <text evidence="1">Tetramer of two alpha and two beta subunits.</text>
</comment>
<comment type="similarity">
    <text evidence="2">Belongs to the ribonucleoside diphosphate reductase small chain family.</text>
</comment>
<comment type="caution">
    <text evidence="2">Seems to lack two of the iron-binding residues.</text>
</comment>
<proteinExistence type="inferred from homology"/>
<gene>
    <name type="primary">nrdF</name>
    <name type="ordered locus">MYCGA0450</name>
    <name type="ORF">MGA_0698</name>
</gene>
<reference key="1">
    <citation type="submission" date="1999-05" db="EMBL/GenBank/DDBJ databases">
        <authorList>
            <person name="Skamrov A.V."/>
            <person name="Gol'dman M.A."/>
            <person name="Feoktistova E.S."/>
            <person name="Bibilashvili R.S."/>
        </authorList>
    </citation>
    <scope>NUCLEOTIDE SEQUENCE [GENOMIC DNA]</scope>
    <source>
        <strain>A5969Var.B</strain>
    </source>
</reference>
<reference key="2">
    <citation type="journal article" date="2003" name="Microbiology">
        <title>The complete genome sequence of the avian pathogen Mycoplasma gallisepticum strain R(low).</title>
        <authorList>
            <person name="Papazisi L."/>
            <person name="Gorton T.S."/>
            <person name="Kutish G."/>
            <person name="Markham P.F."/>
            <person name="Browning G.F."/>
            <person name="Nguyen D.K."/>
            <person name="Swartzell S."/>
            <person name="Madan A."/>
            <person name="Mahairas G."/>
            <person name="Geary S.J."/>
        </authorList>
    </citation>
    <scope>NUCLEOTIDE SEQUENCE [LARGE SCALE GENOMIC DNA]</scope>
    <source>
        <strain>R(low / passage 15 / clone 2)</strain>
    </source>
</reference>
<evidence type="ECO:0000250" key="1"/>
<evidence type="ECO:0000305" key="2"/>
<feature type="chain" id="PRO_0000190482" description="Ribonucleoside-diphosphate reductase subunit beta">
    <location>
        <begin position="1"/>
        <end position="339"/>
    </location>
</feature>
<feature type="active site" evidence="1">
    <location>
        <position position="125"/>
    </location>
</feature>
<feature type="binding site" evidence="1">
    <location>
        <position position="87"/>
    </location>
    <ligand>
        <name>Fe cation</name>
        <dbReference type="ChEBI" id="CHEBI:24875"/>
        <label>1</label>
    </ligand>
</feature>
<feature type="binding site" evidence="1">
    <location>
        <position position="121"/>
    </location>
    <ligand>
        <name>Fe cation</name>
        <dbReference type="ChEBI" id="CHEBI:24875"/>
        <label>1</label>
    </ligand>
</feature>
<feature type="binding site">
    <location>
        <position position="215"/>
    </location>
    <ligand>
        <name>Fe cation</name>
        <dbReference type="ChEBI" id="CHEBI:24875"/>
        <label>2</label>
    </ligand>
</feature>
<keyword id="KW-0215">Deoxyribonucleotide synthesis</keyword>
<keyword id="KW-0408">Iron</keyword>
<keyword id="KW-0479">Metal-binding</keyword>
<keyword id="KW-0560">Oxidoreductase</keyword>
<keyword id="KW-1185">Reference proteome</keyword>